<keyword id="KW-0963">Cytoplasm</keyword>
<keyword id="KW-0342">GTP-binding</keyword>
<keyword id="KW-0396">Initiation factor</keyword>
<keyword id="KW-0547">Nucleotide-binding</keyword>
<keyword id="KW-0648">Protein biosynthesis</keyword>
<sequence>MADTTVEKLATEVGKSVERLIEQFSQAGIKKGQTDNVSEAEKQQLLDYLKKQHGGESAPTKMTLQRKTVSTLSVAGNGGQSKDVKVEVRKTRTFVKRDVSEAVLKAEEEAKAKAEAEAQAKAEAEAKARAEAEAKAKADAEAKAEAKAKADAEAKAKAKAATDAKTTKDTSPEAEAARVEAERLKAAQAEATKRKQDEEAAKAAEKARLLAEENSKRWDEEERQRKEAERYSDHHITTSKVARAAEDSSDMDEEKRGRRARNKNTAKTKRGGKDARDGREKHMRNRSTAPESMAHGFNKPVAAVTRDVRIGETVTVAELAHLMAVKATEIIKQMMKMGSMVTINQVLDQETAQLVAEEMGHKVVLIRENELEQQVLSERDEEGGVKLEPRAPVVTIMGHVDHGKTSLLDYIRRAKVAAGEAGGITQHIGAYHVETENGMITFLDTPGHAAFTAMRARGAKATDIVVLVVAADDGVMPQTIEAIQHAKAGNVPLIVAVNKMDKPEADIDRVKSELAQHGVMSEDWGGDNMFAFVSAKTGAGVDDLLEGILLQAEVLELKAVRDGMAAGVVIESQLDKGRGPVATILVQEGTLRQGDIVLCGLEYGKIRAMKDENGRSITEAGPSIPVEILGLSGVPSAGDEATVVRDERKAREVALYRQGKFRDVKLARQQKSKLENMFANMTEGEVKELNIVLKADVQGSLEAITDSLMGLSTDEVKVNIIARGVGALTETDATLAAASNAIMVGFNVRADAQARKTIESESVDLRYYSVIYNLIDEVKAAMTGMLSPEFKQQIIGLAEVRDVFKSPKLGAIAGCMVTEGTIKRSAPIRVLRDNVVIFEGELESLRRFKDDVNEVRNGMECGIGVKNYNDVRVGDQIEVFETVEVARTL</sequence>
<protein>
    <recommendedName>
        <fullName evidence="2">Translation initiation factor IF-2</fullName>
    </recommendedName>
</protein>
<accession>A0KTZ6</accession>
<reference key="1">
    <citation type="submission" date="2006-09" db="EMBL/GenBank/DDBJ databases">
        <title>Complete sequence of chromosome 1 of Shewanella sp. ANA-3.</title>
        <authorList>
            <person name="Copeland A."/>
            <person name="Lucas S."/>
            <person name="Lapidus A."/>
            <person name="Barry K."/>
            <person name="Detter J.C."/>
            <person name="Glavina del Rio T."/>
            <person name="Hammon N."/>
            <person name="Israni S."/>
            <person name="Dalin E."/>
            <person name="Tice H."/>
            <person name="Pitluck S."/>
            <person name="Chertkov O."/>
            <person name="Brettin T."/>
            <person name="Bruce D."/>
            <person name="Han C."/>
            <person name="Tapia R."/>
            <person name="Gilna P."/>
            <person name="Schmutz J."/>
            <person name="Larimer F."/>
            <person name="Land M."/>
            <person name="Hauser L."/>
            <person name="Kyrpides N."/>
            <person name="Kim E."/>
            <person name="Newman D."/>
            <person name="Salticov C."/>
            <person name="Konstantinidis K."/>
            <person name="Klappenback J."/>
            <person name="Tiedje J."/>
            <person name="Richardson P."/>
        </authorList>
    </citation>
    <scope>NUCLEOTIDE SEQUENCE [LARGE SCALE GENOMIC DNA]</scope>
    <source>
        <strain>ANA-3</strain>
    </source>
</reference>
<name>IF2_SHESA</name>
<proteinExistence type="inferred from homology"/>
<organism>
    <name type="scientific">Shewanella sp. (strain ANA-3)</name>
    <dbReference type="NCBI Taxonomy" id="94122"/>
    <lineage>
        <taxon>Bacteria</taxon>
        <taxon>Pseudomonadati</taxon>
        <taxon>Pseudomonadota</taxon>
        <taxon>Gammaproteobacteria</taxon>
        <taxon>Alteromonadales</taxon>
        <taxon>Shewanellaceae</taxon>
        <taxon>Shewanella</taxon>
    </lineage>
</organism>
<gene>
    <name evidence="2" type="primary">infB</name>
    <name type="ordered locus">Shewana3_1030</name>
</gene>
<dbReference type="EMBL" id="CP000469">
    <property type="protein sequence ID" value="ABK47265.1"/>
    <property type="molecule type" value="Genomic_DNA"/>
</dbReference>
<dbReference type="RefSeq" id="WP_011716143.1">
    <property type="nucleotide sequence ID" value="NC_008577.1"/>
</dbReference>
<dbReference type="SMR" id="A0KTZ6"/>
<dbReference type="STRING" id="94122.Shewana3_1030"/>
<dbReference type="KEGG" id="shn:Shewana3_1030"/>
<dbReference type="eggNOG" id="COG0532">
    <property type="taxonomic scope" value="Bacteria"/>
</dbReference>
<dbReference type="HOGENOM" id="CLU_006301_6_3_6"/>
<dbReference type="OrthoDB" id="9811804at2"/>
<dbReference type="Proteomes" id="UP000002589">
    <property type="component" value="Chromosome"/>
</dbReference>
<dbReference type="GO" id="GO:0005829">
    <property type="term" value="C:cytosol"/>
    <property type="evidence" value="ECO:0007669"/>
    <property type="project" value="TreeGrafter"/>
</dbReference>
<dbReference type="GO" id="GO:0005525">
    <property type="term" value="F:GTP binding"/>
    <property type="evidence" value="ECO:0007669"/>
    <property type="project" value="UniProtKB-KW"/>
</dbReference>
<dbReference type="GO" id="GO:0003924">
    <property type="term" value="F:GTPase activity"/>
    <property type="evidence" value="ECO:0007669"/>
    <property type="project" value="UniProtKB-UniRule"/>
</dbReference>
<dbReference type="GO" id="GO:0097216">
    <property type="term" value="F:guanosine tetraphosphate binding"/>
    <property type="evidence" value="ECO:0007669"/>
    <property type="project" value="UniProtKB-ARBA"/>
</dbReference>
<dbReference type="GO" id="GO:0003743">
    <property type="term" value="F:translation initiation factor activity"/>
    <property type="evidence" value="ECO:0007669"/>
    <property type="project" value="UniProtKB-UniRule"/>
</dbReference>
<dbReference type="CDD" id="cd01887">
    <property type="entry name" value="IF2_eIF5B"/>
    <property type="match status" value="1"/>
</dbReference>
<dbReference type="CDD" id="cd03702">
    <property type="entry name" value="IF2_mtIF2_II"/>
    <property type="match status" value="1"/>
</dbReference>
<dbReference type="CDD" id="cd03692">
    <property type="entry name" value="mtIF2_IVc"/>
    <property type="match status" value="1"/>
</dbReference>
<dbReference type="FunFam" id="2.40.30.10:FF:000007">
    <property type="entry name" value="Translation initiation factor IF-2"/>
    <property type="match status" value="1"/>
</dbReference>
<dbReference type="FunFam" id="2.40.30.10:FF:000008">
    <property type="entry name" value="Translation initiation factor IF-2"/>
    <property type="match status" value="1"/>
</dbReference>
<dbReference type="FunFam" id="3.40.50.10050:FF:000001">
    <property type="entry name" value="Translation initiation factor IF-2"/>
    <property type="match status" value="1"/>
</dbReference>
<dbReference type="FunFam" id="3.40.50.300:FF:000019">
    <property type="entry name" value="Translation initiation factor IF-2"/>
    <property type="match status" value="1"/>
</dbReference>
<dbReference type="Gene3D" id="3.40.50.300">
    <property type="entry name" value="P-loop containing nucleotide triphosphate hydrolases"/>
    <property type="match status" value="1"/>
</dbReference>
<dbReference type="Gene3D" id="3.30.56.50">
    <property type="entry name" value="Putative DNA-binding domain, N-terminal subdomain of bacterial translation initiation factor IF2"/>
    <property type="match status" value="1"/>
</dbReference>
<dbReference type="Gene3D" id="2.40.30.10">
    <property type="entry name" value="Translation factors"/>
    <property type="match status" value="2"/>
</dbReference>
<dbReference type="Gene3D" id="3.40.50.10050">
    <property type="entry name" value="Translation initiation factor IF- 2, domain 3"/>
    <property type="match status" value="1"/>
</dbReference>
<dbReference type="HAMAP" id="MF_00100_B">
    <property type="entry name" value="IF_2_B"/>
    <property type="match status" value="1"/>
</dbReference>
<dbReference type="InterPro" id="IPR009061">
    <property type="entry name" value="DNA-bd_dom_put_sf"/>
</dbReference>
<dbReference type="InterPro" id="IPR053905">
    <property type="entry name" value="EF-G-like_DII"/>
</dbReference>
<dbReference type="InterPro" id="IPR004161">
    <property type="entry name" value="EFTu-like_2"/>
</dbReference>
<dbReference type="InterPro" id="IPR013575">
    <property type="entry name" value="IF2_assoc_dom_bac"/>
</dbReference>
<dbReference type="InterPro" id="IPR044145">
    <property type="entry name" value="IF2_II"/>
</dbReference>
<dbReference type="InterPro" id="IPR006847">
    <property type="entry name" value="IF2_N"/>
</dbReference>
<dbReference type="InterPro" id="IPR027417">
    <property type="entry name" value="P-loop_NTPase"/>
</dbReference>
<dbReference type="InterPro" id="IPR005225">
    <property type="entry name" value="Small_GTP-bd"/>
</dbReference>
<dbReference type="InterPro" id="IPR000795">
    <property type="entry name" value="T_Tr_GTP-bd_dom"/>
</dbReference>
<dbReference type="InterPro" id="IPR000178">
    <property type="entry name" value="TF_IF2_bacterial-like"/>
</dbReference>
<dbReference type="InterPro" id="IPR015760">
    <property type="entry name" value="TIF_IF2"/>
</dbReference>
<dbReference type="InterPro" id="IPR023115">
    <property type="entry name" value="TIF_IF2_dom3"/>
</dbReference>
<dbReference type="InterPro" id="IPR036925">
    <property type="entry name" value="TIF_IF2_dom3_sf"/>
</dbReference>
<dbReference type="InterPro" id="IPR009000">
    <property type="entry name" value="Transl_B-barrel_sf"/>
</dbReference>
<dbReference type="NCBIfam" id="TIGR00487">
    <property type="entry name" value="IF-2"/>
    <property type="match status" value="1"/>
</dbReference>
<dbReference type="NCBIfam" id="TIGR00231">
    <property type="entry name" value="small_GTP"/>
    <property type="match status" value="1"/>
</dbReference>
<dbReference type="PANTHER" id="PTHR43381:SF5">
    <property type="entry name" value="TR-TYPE G DOMAIN-CONTAINING PROTEIN"/>
    <property type="match status" value="1"/>
</dbReference>
<dbReference type="PANTHER" id="PTHR43381">
    <property type="entry name" value="TRANSLATION INITIATION FACTOR IF-2-RELATED"/>
    <property type="match status" value="1"/>
</dbReference>
<dbReference type="Pfam" id="PF22042">
    <property type="entry name" value="EF-G_D2"/>
    <property type="match status" value="1"/>
</dbReference>
<dbReference type="Pfam" id="PF00009">
    <property type="entry name" value="GTP_EFTU"/>
    <property type="match status" value="1"/>
</dbReference>
<dbReference type="Pfam" id="PF03144">
    <property type="entry name" value="GTP_EFTU_D2"/>
    <property type="match status" value="1"/>
</dbReference>
<dbReference type="Pfam" id="PF11987">
    <property type="entry name" value="IF-2"/>
    <property type="match status" value="1"/>
</dbReference>
<dbReference type="Pfam" id="PF08364">
    <property type="entry name" value="IF2_assoc"/>
    <property type="match status" value="1"/>
</dbReference>
<dbReference type="Pfam" id="PF04760">
    <property type="entry name" value="IF2_N"/>
    <property type="match status" value="2"/>
</dbReference>
<dbReference type="SUPFAM" id="SSF52156">
    <property type="entry name" value="Initiation factor IF2/eIF5b, domain 3"/>
    <property type="match status" value="1"/>
</dbReference>
<dbReference type="SUPFAM" id="SSF52540">
    <property type="entry name" value="P-loop containing nucleoside triphosphate hydrolases"/>
    <property type="match status" value="1"/>
</dbReference>
<dbReference type="SUPFAM" id="SSF46955">
    <property type="entry name" value="Putative DNA-binding domain"/>
    <property type="match status" value="1"/>
</dbReference>
<dbReference type="SUPFAM" id="SSF50447">
    <property type="entry name" value="Translation proteins"/>
    <property type="match status" value="2"/>
</dbReference>
<dbReference type="PROSITE" id="PS51722">
    <property type="entry name" value="G_TR_2"/>
    <property type="match status" value="1"/>
</dbReference>
<dbReference type="PROSITE" id="PS01176">
    <property type="entry name" value="IF2"/>
    <property type="match status" value="1"/>
</dbReference>
<evidence type="ECO:0000250" key="1"/>
<evidence type="ECO:0000255" key="2">
    <source>
        <dbReference type="HAMAP-Rule" id="MF_00100"/>
    </source>
</evidence>
<evidence type="ECO:0000256" key="3">
    <source>
        <dbReference type="SAM" id="MobiDB-lite"/>
    </source>
</evidence>
<feature type="chain" id="PRO_1000008334" description="Translation initiation factor IF-2">
    <location>
        <begin position="1"/>
        <end position="889"/>
    </location>
</feature>
<feature type="domain" description="tr-type G">
    <location>
        <begin position="389"/>
        <end position="558"/>
    </location>
</feature>
<feature type="region of interest" description="Disordered" evidence="3">
    <location>
        <begin position="115"/>
        <end position="293"/>
    </location>
</feature>
<feature type="region of interest" description="G1" evidence="1">
    <location>
        <begin position="398"/>
        <end position="405"/>
    </location>
</feature>
<feature type="region of interest" description="G2" evidence="1">
    <location>
        <begin position="423"/>
        <end position="427"/>
    </location>
</feature>
<feature type="region of interest" description="G3" evidence="1">
    <location>
        <begin position="444"/>
        <end position="447"/>
    </location>
</feature>
<feature type="region of interest" description="G4" evidence="1">
    <location>
        <begin position="498"/>
        <end position="501"/>
    </location>
</feature>
<feature type="region of interest" description="G5" evidence="1">
    <location>
        <begin position="534"/>
        <end position="536"/>
    </location>
</feature>
<feature type="compositionally biased region" description="Basic and acidic residues" evidence="3">
    <location>
        <begin position="115"/>
        <end position="236"/>
    </location>
</feature>
<feature type="compositionally biased region" description="Basic residues" evidence="3">
    <location>
        <begin position="257"/>
        <end position="270"/>
    </location>
</feature>
<feature type="compositionally biased region" description="Basic and acidic residues" evidence="3">
    <location>
        <begin position="271"/>
        <end position="280"/>
    </location>
</feature>
<feature type="binding site" evidence="2">
    <location>
        <begin position="398"/>
        <end position="405"/>
    </location>
    <ligand>
        <name>GTP</name>
        <dbReference type="ChEBI" id="CHEBI:37565"/>
    </ligand>
</feature>
<feature type="binding site" evidence="2">
    <location>
        <begin position="444"/>
        <end position="448"/>
    </location>
    <ligand>
        <name>GTP</name>
        <dbReference type="ChEBI" id="CHEBI:37565"/>
    </ligand>
</feature>
<feature type="binding site" evidence="2">
    <location>
        <begin position="498"/>
        <end position="501"/>
    </location>
    <ligand>
        <name>GTP</name>
        <dbReference type="ChEBI" id="CHEBI:37565"/>
    </ligand>
</feature>
<comment type="function">
    <text evidence="2">One of the essential components for the initiation of protein synthesis. Protects formylmethionyl-tRNA from spontaneous hydrolysis and promotes its binding to the 30S ribosomal subunits. Also involved in the hydrolysis of GTP during the formation of the 70S ribosomal complex.</text>
</comment>
<comment type="subcellular location">
    <subcellularLocation>
        <location evidence="2">Cytoplasm</location>
    </subcellularLocation>
</comment>
<comment type="similarity">
    <text evidence="2">Belongs to the TRAFAC class translation factor GTPase superfamily. Classic translation factor GTPase family. IF-2 subfamily.</text>
</comment>